<protein>
    <recommendedName>
        <fullName>Sorting nexin-25</fullName>
    </recommendedName>
</protein>
<name>SNX25_HUMAN</name>
<dbReference type="EMBL" id="AY601647">
    <property type="protein sequence ID" value="AAT98627.1"/>
    <property type="molecule type" value="mRNA"/>
</dbReference>
<dbReference type="EMBL" id="BC029868">
    <property type="protein sequence ID" value="AAH29868.2"/>
    <property type="molecule type" value="mRNA"/>
</dbReference>
<dbReference type="EMBL" id="AF113223">
    <property type="protein sequence ID" value="AAG39294.1"/>
    <property type="status" value="ALT_INIT"/>
    <property type="molecule type" value="mRNA"/>
</dbReference>
<dbReference type="EMBL" id="AY044656">
    <property type="protein sequence ID" value="AAK98770.1"/>
    <property type="molecule type" value="mRNA"/>
</dbReference>
<dbReference type="CCDS" id="CCDS34116.1">
    <molecule id="Q9H3E2-1"/>
</dbReference>
<dbReference type="RefSeq" id="NP_001304710.1">
    <molecule id="Q9H3E2-1"/>
    <property type="nucleotide sequence ID" value="NM_001317781.2"/>
</dbReference>
<dbReference type="PDB" id="5WOE">
    <property type="method" value="NMR"/>
    <property type="chains" value="A=506-628"/>
</dbReference>
<dbReference type="PDB" id="7SR1">
    <property type="method" value="X-ray"/>
    <property type="resolution" value="2.40 A"/>
    <property type="chains" value="A/B=282-405"/>
</dbReference>
<dbReference type="PDB" id="7SR2">
    <property type="method" value="X-ray"/>
    <property type="resolution" value="2.42 A"/>
    <property type="chains" value="A/B=282-405"/>
</dbReference>
<dbReference type="PDBsum" id="5WOE"/>
<dbReference type="PDBsum" id="7SR1"/>
<dbReference type="PDBsum" id="7SR2"/>
<dbReference type="SMR" id="Q9H3E2"/>
<dbReference type="BioGRID" id="123802">
    <property type="interactions" value="23"/>
</dbReference>
<dbReference type="FunCoup" id="Q9H3E2">
    <property type="interactions" value="2075"/>
</dbReference>
<dbReference type="IntAct" id="Q9H3E2">
    <property type="interactions" value="13"/>
</dbReference>
<dbReference type="STRING" id="9606.ENSP00000426255"/>
<dbReference type="TCDB" id="3.A.34.1.1">
    <property type="family name" value="the sorting nexins of the escrt complexes (sn-escrt)"/>
</dbReference>
<dbReference type="GlyGen" id="Q9H3E2">
    <property type="glycosylation" value="1 site, 1 O-linked glycan (1 site)"/>
</dbReference>
<dbReference type="iPTMnet" id="Q9H3E2"/>
<dbReference type="PhosphoSitePlus" id="Q9H3E2"/>
<dbReference type="BioMuta" id="SNX25"/>
<dbReference type="DMDM" id="212276473"/>
<dbReference type="jPOST" id="Q9H3E2"/>
<dbReference type="MassIVE" id="Q9H3E2"/>
<dbReference type="PaxDb" id="9606-ENSP00000426255"/>
<dbReference type="PeptideAtlas" id="Q9H3E2"/>
<dbReference type="ProteomicsDB" id="80704">
    <molecule id="Q9H3E2-1"/>
</dbReference>
<dbReference type="Pumba" id="Q9H3E2"/>
<dbReference type="Antibodypedia" id="28920">
    <property type="antibodies" value="148 antibodies from 27 providers"/>
</dbReference>
<dbReference type="DNASU" id="83891"/>
<dbReference type="Ensembl" id="ENST00000264694.13">
    <molecule id="Q9H3E2-1"/>
    <property type="protein sequence ID" value="ENSP00000264694.8"/>
    <property type="gene ID" value="ENSG00000109762.17"/>
</dbReference>
<dbReference type="Ensembl" id="ENST00000504273.5">
    <molecule id="Q9H3E2-1"/>
    <property type="protein sequence ID" value="ENSP00000426255.1"/>
    <property type="gene ID" value="ENSG00000109762.17"/>
</dbReference>
<dbReference type="Ensembl" id="ENST00000618785.4">
    <molecule id="Q9H3E2-2"/>
    <property type="protein sequence ID" value="ENSP00000483653.1"/>
    <property type="gene ID" value="ENSG00000109762.17"/>
</dbReference>
<dbReference type="GeneID" id="83891"/>
<dbReference type="KEGG" id="hsa:83891"/>
<dbReference type="UCSC" id="uc003ixh.4">
    <molecule id="Q9H3E2-1"/>
    <property type="organism name" value="human"/>
</dbReference>
<dbReference type="AGR" id="HGNC:21883"/>
<dbReference type="CTD" id="83891"/>
<dbReference type="DisGeNET" id="83891"/>
<dbReference type="GeneCards" id="SNX25"/>
<dbReference type="HGNC" id="HGNC:21883">
    <property type="gene designation" value="SNX25"/>
</dbReference>
<dbReference type="HPA" id="ENSG00000109762">
    <property type="expression patterns" value="Low tissue specificity"/>
</dbReference>
<dbReference type="MIM" id="620961">
    <property type="type" value="gene"/>
</dbReference>
<dbReference type="neXtProt" id="NX_Q9H3E2"/>
<dbReference type="OpenTargets" id="ENSG00000109762"/>
<dbReference type="PharmGKB" id="PA134988505"/>
<dbReference type="VEuPathDB" id="HostDB:ENSG00000109762"/>
<dbReference type="eggNOG" id="KOG2101">
    <property type="taxonomic scope" value="Eukaryota"/>
</dbReference>
<dbReference type="GeneTree" id="ENSGT00950000182856"/>
<dbReference type="HOGENOM" id="CLU_005899_0_1_1"/>
<dbReference type="InParanoid" id="Q9H3E2"/>
<dbReference type="OrthoDB" id="120967at2759"/>
<dbReference type="PAN-GO" id="Q9H3E2">
    <property type="GO annotations" value="2 GO annotations based on evolutionary models"/>
</dbReference>
<dbReference type="PhylomeDB" id="Q9H3E2"/>
<dbReference type="TreeFam" id="TF324055"/>
<dbReference type="PathwayCommons" id="Q9H3E2"/>
<dbReference type="SignaLink" id="Q9H3E2"/>
<dbReference type="BioGRID-ORCS" id="83891">
    <property type="hits" value="17 hits in 1148 CRISPR screens"/>
</dbReference>
<dbReference type="ChiTaRS" id="SNX25">
    <property type="organism name" value="human"/>
</dbReference>
<dbReference type="GenomeRNAi" id="83891"/>
<dbReference type="Pharos" id="Q9H3E2">
    <property type="development level" value="Tbio"/>
</dbReference>
<dbReference type="PRO" id="PR:Q9H3E2"/>
<dbReference type="Proteomes" id="UP000005640">
    <property type="component" value="Chromosome 4"/>
</dbReference>
<dbReference type="RNAct" id="Q9H3E2">
    <property type="molecule type" value="protein"/>
</dbReference>
<dbReference type="Bgee" id="ENSG00000109762">
    <property type="expression patterns" value="Expressed in oocyte and 184 other cell types or tissues"/>
</dbReference>
<dbReference type="ExpressionAtlas" id="Q9H3E2">
    <property type="expression patterns" value="baseline and differential"/>
</dbReference>
<dbReference type="GO" id="GO:0005768">
    <property type="term" value="C:endosome"/>
    <property type="evidence" value="ECO:0000318"/>
    <property type="project" value="GO_Central"/>
</dbReference>
<dbReference type="GO" id="GO:0010008">
    <property type="term" value="C:endosome membrane"/>
    <property type="evidence" value="ECO:0007669"/>
    <property type="project" value="UniProtKB-SubCell"/>
</dbReference>
<dbReference type="GO" id="GO:0043231">
    <property type="term" value="C:intracellular membrane-bounded organelle"/>
    <property type="evidence" value="ECO:0000314"/>
    <property type="project" value="HPA"/>
</dbReference>
<dbReference type="GO" id="GO:0035091">
    <property type="term" value="F:phosphatidylinositol binding"/>
    <property type="evidence" value="ECO:0000318"/>
    <property type="project" value="GO_Central"/>
</dbReference>
<dbReference type="GO" id="GO:0030512">
    <property type="term" value="P:negative regulation of transforming growth factor beta receptor signaling pathway"/>
    <property type="evidence" value="ECO:0000315"/>
    <property type="project" value="UniProtKB"/>
</dbReference>
<dbReference type="GO" id="GO:0015031">
    <property type="term" value="P:protein transport"/>
    <property type="evidence" value="ECO:0007669"/>
    <property type="project" value="UniProtKB-KW"/>
</dbReference>
<dbReference type="GO" id="GO:0032801">
    <property type="term" value="P:receptor catabolic process"/>
    <property type="evidence" value="ECO:0000315"/>
    <property type="project" value="UniProtKB"/>
</dbReference>
<dbReference type="CDD" id="cd06878">
    <property type="entry name" value="PX_SNX25"/>
    <property type="match status" value="1"/>
</dbReference>
<dbReference type="CDD" id="cd08720">
    <property type="entry name" value="RGS_SNX25"/>
    <property type="match status" value="1"/>
</dbReference>
<dbReference type="FunFam" id="3.30.1520.10:FF:000033">
    <property type="entry name" value="Sorting nexin 25"/>
    <property type="match status" value="1"/>
</dbReference>
<dbReference type="FunFam" id="1.10.167.10:FF:000013">
    <property type="entry name" value="sorting nexin-25 isoform X1"/>
    <property type="match status" value="1"/>
</dbReference>
<dbReference type="Gene3D" id="3.30.1520.10">
    <property type="entry name" value="Phox-like domain"/>
    <property type="match status" value="1"/>
</dbReference>
<dbReference type="Gene3D" id="1.10.167.10">
    <property type="entry name" value="Regulator of G-protein Signalling 4, domain 2"/>
    <property type="match status" value="1"/>
</dbReference>
<dbReference type="InterPro" id="IPR003114">
    <property type="entry name" value="Phox_assoc"/>
</dbReference>
<dbReference type="InterPro" id="IPR001683">
    <property type="entry name" value="PX_dom"/>
</dbReference>
<dbReference type="InterPro" id="IPR036871">
    <property type="entry name" value="PX_dom_sf"/>
</dbReference>
<dbReference type="InterPro" id="IPR016137">
    <property type="entry name" value="RGS"/>
</dbReference>
<dbReference type="InterPro" id="IPR036305">
    <property type="entry name" value="RGS_sf"/>
</dbReference>
<dbReference type="InterPro" id="IPR044926">
    <property type="entry name" value="RGS_subdomain_2"/>
</dbReference>
<dbReference type="InterPro" id="IPR037899">
    <property type="entry name" value="SNX25_PX"/>
</dbReference>
<dbReference type="InterPro" id="IPR013937">
    <property type="entry name" value="Sorting_nexin_C"/>
</dbReference>
<dbReference type="PANTHER" id="PTHR22775">
    <property type="entry name" value="SORTING NEXIN"/>
    <property type="match status" value="1"/>
</dbReference>
<dbReference type="PANTHER" id="PTHR22775:SF48">
    <property type="entry name" value="SORTING NEXIN-25"/>
    <property type="match status" value="1"/>
</dbReference>
<dbReference type="Pfam" id="PF08628">
    <property type="entry name" value="Nexin_C"/>
    <property type="match status" value="1"/>
</dbReference>
<dbReference type="Pfam" id="PF00787">
    <property type="entry name" value="PX"/>
    <property type="match status" value="1"/>
</dbReference>
<dbReference type="Pfam" id="PF02194">
    <property type="entry name" value="PXA"/>
    <property type="match status" value="1"/>
</dbReference>
<dbReference type="Pfam" id="PF00615">
    <property type="entry name" value="RGS"/>
    <property type="match status" value="1"/>
</dbReference>
<dbReference type="SMART" id="SM00312">
    <property type="entry name" value="PX"/>
    <property type="match status" value="1"/>
</dbReference>
<dbReference type="SMART" id="SM00313">
    <property type="entry name" value="PXA"/>
    <property type="match status" value="1"/>
</dbReference>
<dbReference type="SMART" id="SM00315">
    <property type="entry name" value="RGS"/>
    <property type="match status" value="1"/>
</dbReference>
<dbReference type="SUPFAM" id="SSF64268">
    <property type="entry name" value="PX domain"/>
    <property type="match status" value="1"/>
</dbReference>
<dbReference type="SUPFAM" id="SSF48097">
    <property type="entry name" value="Regulator of G-protein signaling, RGS"/>
    <property type="match status" value="1"/>
</dbReference>
<dbReference type="PROSITE" id="PS50195">
    <property type="entry name" value="PX"/>
    <property type="match status" value="1"/>
</dbReference>
<dbReference type="PROSITE" id="PS51207">
    <property type="entry name" value="PXA"/>
    <property type="match status" value="1"/>
</dbReference>
<dbReference type="PROSITE" id="PS50132">
    <property type="entry name" value="RGS"/>
    <property type="match status" value="1"/>
</dbReference>
<reference key="1">
    <citation type="submission" date="2004-04" db="EMBL/GenBank/DDBJ databases">
        <authorList>
            <person name="Hao X."/>
            <person name="Chang Z."/>
            <person name="Zhu S."/>
        </authorList>
    </citation>
    <scope>NUCLEOTIDE SEQUENCE [MRNA] (ISOFORM 1)</scope>
</reference>
<reference key="2">
    <citation type="journal article" date="2004" name="Genome Res.">
        <title>The status, quality, and expansion of the NIH full-length cDNA project: the Mammalian Gene Collection (MGC).</title>
        <authorList>
            <consortium name="The MGC Project Team"/>
        </authorList>
    </citation>
    <scope>NUCLEOTIDE SEQUENCE [LARGE SCALE MRNA] (ISOFORM 2)</scope>
    <source>
        <tissue>Brain</tissue>
    </source>
</reference>
<reference key="3">
    <citation type="submission" date="1998-12" db="EMBL/GenBank/DDBJ databases">
        <authorList>
            <person name="Liu B."/>
            <person name="Liu Y.Q."/>
            <person name="Wang X.Y."/>
            <person name="Zhao B."/>
            <person name="Sheng H."/>
            <person name="Zhao X.W."/>
            <person name="Liu S."/>
            <person name="Xu Y.Y."/>
            <person name="Ye J."/>
            <person name="Song L."/>
            <person name="Gao Y."/>
            <person name="Zhang C.L."/>
            <person name="Zhang J."/>
            <person name="Wei Y.J."/>
            <person name="Cao H.Q."/>
            <person name="Zhao Y."/>
            <person name="Liu L.S."/>
            <person name="Ding J.F."/>
            <person name="Gao R.L."/>
            <person name="Wu Q.Y."/>
            <person name="Qiang B.Q."/>
            <person name="Yuan J.G."/>
            <person name="Liew C.C."/>
            <person name="Zhao M.S."/>
            <person name="Hui R.T."/>
        </authorList>
    </citation>
    <scope>NUCLEOTIDE SEQUENCE [LARGE SCALE MRNA] OF 275-840 (ISOFORM 1)</scope>
    <source>
        <tissue>Heart</tissue>
    </source>
</reference>
<reference key="4">
    <citation type="submission" date="2001-07" db="EMBL/GenBank/DDBJ databases">
        <title>MSTP043 as a new member (SNX25) of the sorting nexin family.</title>
        <authorList>
            <person name="Hong W."/>
        </authorList>
    </citation>
    <scope>NUCLEOTIDE SEQUENCE [MRNA] OF 303-840 (ISOFORM 1)</scope>
</reference>
<reference key="5">
    <citation type="journal article" date="2004" name="Am. J. Respir. Cell Mol. Biol.">
        <title>Proteomic analysis of exosomes isolated from human malignant pleural effusions.</title>
        <authorList>
            <person name="Bard M.P."/>
            <person name="Hegmans J.P."/>
            <person name="Hemmes A."/>
            <person name="Luider T.M."/>
            <person name="Willemsen R."/>
            <person name="Severijnen L.A."/>
            <person name="van Meerbeeck J.P."/>
            <person name="Burgers S.A."/>
            <person name="Hoogsteden H.C."/>
            <person name="Lambrecht B.N."/>
        </authorList>
    </citation>
    <scope>SUBCELLULAR LOCATION</scope>
    <scope>IDENTIFICATION BY MASS SPECTROMETRY</scope>
</reference>
<reference key="6">
    <citation type="journal article" date="2006" name="Cell">
        <title>Global, in vivo, and site-specific phosphorylation dynamics in signaling networks.</title>
        <authorList>
            <person name="Olsen J.V."/>
            <person name="Blagoev B."/>
            <person name="Gnad F."/>
            <person name="Macek B."/>
            <person name="Kumar C."/>
            <person name="Mortensen P."/>
            <person name="Mann M."/>
        </authorList>
    </citation>
    <scope>PHOSPHORYLATION [LARGE SCALE ANALYSIS] AT SER-665</scope>
    <scope>IDENTIFICATION BY MASS SPECTROMETRY [LARGE SCALE ANALYSIS]</scope>
    <source>
        <tissue>Cervix carcinoma</tissue>
    </source>
</reference>
<gene>
    <name type="primary">SNX25</name>
    <name type="ORF">MSTP043</name>
</gene>
<evidence type="ECO:0000250" key="1"/>
<evidence type="ECO:0000255" key="2"/>
<evidence type="ECO:0000255" key="3">
    <source>
        <dbReference type="PROSITE-ProRule" id="PRU00147"/>
    </source>
</evidence>
<evidence type="ECO:0000255" key="4">
    <source>
        <dbReference type="PROSITE-ProRule" id="PRU00171"/>
    </source>
</evidence>
<evidence type="ECO:0000255" key="5">
    <source>
        <dbReference type="PROSITE-ProRule" id="PRU00553"/>
    </source>
</evidence>
<evidence type="ECO:0000269" key="6">
    <source>
    </source>
</evidence>
<evidence type="ECO:0000303" key="7">
    <source>
    </source>
</evidence>
<evidence type="ECO:0000305" key="8"/>
<evidence type="ECO:0007744" key="9">
    <source>
    </source>
</evidence>
<evidence type="ECO:0007829" key="10">
    <source>
        <dbReference type="PDB" id="5WOE"/>
    </source>
</evidence>
<evidence type="ECO:0007829" key="11">
    <source>
        <dbReference type="PDB" id="7SR1"/>
    </source>
</evidence>
<accession>Q9H3E2</accession>
<accession>Q3ZT30</accession>
<accession>Q8N6K3</accession>
<organism>
    <name type="scientific">Homo sapiens</name>
    <name type="common">Human</name>
    <dbReference type="NCBI Taxonomy" id="9606"/>
    <lineage>
        <taxon>Eukaryota</taxon>
        <taxon>Metazoa</taxon>
        <taxon>Chordata</taxon>
        <taxon>Craniata</taxon>
        <taxon>Vertebrata</taxon>
        <taxon>Euteleostomi</taxon>
        <taxon>Mammalia</taxon>
        <taxon>Eutheria</taxon>
        <taxon>Euarchontoglires</taxon>
        <taxon>Primates</taxon>
        <taxon>Haplorrhini</taxon>
        <taxon>Catarrhini</taxon>
        <taxon>Hominidae</taxon>
        <taxon>Homo</taxon>
    </lineage>
</organism>
<feature type="chain" id="PRO_0000213875" description="Sorting nexin-25">
    <location>
        <begin position="1"/>
        <end position="840"/>
    </location>
</feature>
<feature type="domain" description="PXA" evidence="3 5">
    <location>
        <begin position="1"/>
        <end position="164"/>
    </location>
</feature>
<feature type="domain" description="RGS" evidence="4">
    <location>
        <begin position="287"/>
        <end position="401"/>
    </location>
</feature>
<feature type="domain" description="PX" evidence="3">
    <location>
        <begin position="508"/>
        <end position="628"/>
    </location>
</feature>
<feature type="coiled-coil region" evidence="2">
    <location>
        <begin position="434"/>
        <end position="499"/>
    </location>
</feature>
<feature type="modified residue" description="Phosphoserine" evidence="9">
    <location>
        <position position="665"/>
    </location>
</feature>
<feature type="splice variant" id="VSP_057156" description="In isoform 2." evidence="7">
    <location>
        <begin position="1"/>
        <end position="229"/>
    </location>
</feature>
<feature type="splice variant" id="VSP_057157" description="In isoform 2." evidence="7">
    <location>
        <begin position="604"/>
        <end position="658"/>
    </location>
</feature>
<feature type="sequence variant" id="VAR_047057" description="In dbSNP:rs35700132.">
    <original>E</original>
    <variation>K</variation>
    <location>
        <position position="318"/>
    </location>
</feature>
<feature type="sequence variant" id="VAR_047058" description="In dbSNP:rs3756275.">
    <original>I</original>
    <variation>V</variation>
    <location>
        <position position="586"/>
    </location>
</feature>
<feature type="sequence variant" id="VAR_047059" description="In dbSNP:rs34120554.">
    <original>T</original>
    <variation>I</variation>
    <location>
        <position position="725"/>
    </location>
</feature>
<feature type="helix" evidence="11">
    <location>
        <begin position="288"/>
        <end position="293"/>
    </location>
</feature>
<feature type="helix" evidence="11">
    <location>
        <begin position="295"/>
        <end position="307"/>
    </location>
</feature>
<feature type="helix" evidence="11">
    <location>
        <begin position="311"/>
        <end position="324"/>
    </location>
</feature>
<feature type="turn" evidence="11">
    <location>
        <begin position="328"/>
        <end position="330"/>
    </location>
</feature>
<feature type="helix" evidence="11">
    <location>
        <begin position="331"/>
        <end position="342"/>
    </location>
</feature>
<feature type="helix" evidence="11">
    <location>
        <begin position="351"/>
        <end position="354"/>
    </location>
</feature>
<feature type="helix" evidence="11">
    <location>
        <begin position="356"/>
        <end position="361"/>
    </location>
</feature>
<feature type="helix" evidence="11">
    <location>
        <begin position="366"/>
        <end position="386"/>
    </location>
</feature>
<feature type="helix" evidence="11">
    <location>
        <begin position="388"/>
        <end position="392"/>
    </location>
</feature>
<feature type="helix" evidence="11">
    <location>
        <begin position="397"/>
        <end position="400"/>
    </location>
</feature>
<feature type="strand" evidence="10">
    <location>
        <begin position="510"/>
        <end position="522"/>
    </location>
</feature>
<feature type="strand" evidence="10">
    <location>
        <begin position="525"/>
        <end position="536"/>
    </location>
</feature>
<feature type="strand" evidence="10">
    <location>
        <begin position="545"/>
        <end position="552"/>
    </location>
</feature>
<feature type="helix" evidence="10">
    <location>
        <begin position="553"/>
        <end position="566"/>
    </location>
</feature>
<feature type="helix" evidence="10">
    <location>
        <begin position="569"/>
        <end position="572"/>
    </location>
</feature>
<feature type="strand" evidence="10">
    <location>
        <begin position="582"/>
        <end position="584"/>
    </location>
</feature>
<feature type="helix" evidence="10">
    <location>
        <begin position="588"/>
        <end position="607"/>
    </location>
</feature>
<feature type="helix" evidence="10">
    <location>
        <begin position="609"/>
        <end position="613"/>
    </location>
</feature>
<feature type="helix" evidence="10">
    <location>
        <begin position="615"/>
        <end position="621"/>
    </location>
</feature>
<comment type="function">
    <text evidence="1">May be involved in several stages of intracellular trafficking.</text>
</comment>
<comment type="subcellular location">
    <subcellularLocation>
        <location evidence="6">Endosome membrane</location>
        <topology evidence="6">Peripheral membrane protein</topology>
    </subcellularLocation>
    <text>Detected in endosome-derived secreted vesicles (exosomes) from malignant pleural effusions.</text>
</comment>
<comment type="alternative products">
    <event type="alternative splicing"/>
    <isoform>
        <id>Q9H3E2-1</id>
        <name>1</name>
        <sequence type="displayed"/>
    </isoform>
    <isoform>
        <id>Q9H3E2-2</id>
        <name>2</name>
        <sequence type="described" ref="VSP_057156 VSP_057157"/>
    </isoform>
</comment>
<comment type="similarity">
    <text evidence="8">Belongs to the sorting nexin family.</text>
</comment>
<comment type="sequence caution" evidence="8">
    <conflict type="erroneous initiation">
        <sequence resource="EMBL-CDS" id="AAG39294"/>
    </conflict>
</comment>
<keyword id="KW-0002">3D-structure</keyword>
<keyword id="KW-0025">Alternative splicing</keyword>
<keyword id="KW-0175">Coiled coil</keyword>
<keyword id="KW-0967">Endosome</keyword>
<keyword id="KW-0472">Membrane</keyword>
<keyword id="KW-0597">Phosphoprotein</keyword>
<keyword id="KW-0653">Protein transport</keyword>
<keyword id="KW-1267">Proteomics identification</keyword>
<keyword id="KW-1185">Reference proteome</keyword>
<keyword id="KW-0813">Transport</keyword>
<sequence>MDKALKEVFDYSYRDYILSWYGNLSRDEGQLYHLLLEDFWEIARQLHHRLSHVDVVKVVCNDVVRTLLTHFCDLKAANARHEEQPRPFVLHACLRNSDDEVRFLQTCSRVLVFCLLPSKDVQSLSLRIMLAEILTTKVLKPVVELLSNPDYINQMLLAQLAYREQMNEHHKRAYTYAPSYEDFIKLINSNSDVEFLKQLRYQIVVEIIQATTISSFPQLKRHKGKETAAMKADLLRARNMKRYINQLTVAKKQCEKRIRILGGPAYDQQEDGALDEGEGPQSQKILQFEDILANTFYREHFGMYMERMDKRALISFWESVEHLKNANKNEIPQLVGEIYQNFFVESKEISVEKSLYKEIQQCLVGNKGIEVFYKIQEDVYETLKDRYYPSFIVSDLYEKLLIKEEEKHASQMISNKDEMGPRDEAGEEAVDDGTNQINEQASFAVNKLRELNEKLEYKRQALNSIQNAPKPDKKIVSKLKDEIILIEKERTDLQLHMARTDWWCENLGMWKASITSGEVTEENGEQLPCYFVMVSLQEVGGVETKNWTVPRRLSEFQNLHRKLSECVPSLKKVQLPSLSKLPFKSIDQKFMEKSKNQLNKFLQNLLSDERLCQSEALYAFLSPSPDYLKVIDVQGKKNSFSLSSFLERLPRDFFSHQEEETEEDSDLSDYGDDVDGRKDALAEPCFMLIGEIFELRGMFKWVRRTLIALVQVTFGRTINKQIRDTVSWIFSEQMLVYYINIFRDAFWPNGKLAPPTTIRSKEQSQETKQRAQQKLLENIPDMLQSLVGQQNARHGIIKIFNALQETRANKHLLYALMELLLIELCPELRVHLDQLKAGQV</sequence>
<proteinExistence type="evidence at protein level"/>